<dbReference type="EC" id="4.2.1.33" evidence="1"/>
<dbReference type="EMBL" id="CP001472">
    <property type="protein sequence ID" value="ACO33917.1"/>
    <property type="molecule type" value="Genomic_DNA"/>
</dbReference>
<dbReference type="RefSeq" id="WP_015898498.1">
    <property type="nucleotide sequence ID" value="NC_012483.1"/>
</dbReference>
<dbReference type="SMR" id="C1F700"/>
<dbReference type="FunCoup" id="C1F700">
    <property type="interactions" value="507"/>
</dbReference>
<dbReference type="STRING" id="240015.ACP_3469"/>
<dbReference type="KEGG" id="aca:ACP_3469"/>
<dbReference type="eggNOG" id="COG0065">
    <property type="taxonomic scope" value="Bacteria"/>
</dbReference>
<dbReference type="HOGENOM" id="CLU_006714_3_4_0"/>
<dbReference type="InParanoid" id="C1F700"/>
<dbReference type="OrthoDB" id="9802769at2"/>
<dbReference type="UniPathway" id="UPA00048">
    <property type="reaction ID" value="UER00071"/>
</dbReference>
<dbReference type="Proteomes" id="UP000002207">
    <property type="component" value="Chromosome"/>
</dbReference>
<dbReference type="GO" id="GO:0003861">
    <property type="term" value="F:3-isopropylmalate dehydratase activity"/>
    <property type="evidence" value="ECO:0007669"/>
    <property type="project" value="UniProtKB-UniRule"/>
</dbReference>
<dbReference type="GO" id="GO:0051539">
    <property type="term" value="F:4 iron, 4 sulfur cluster binding"/>
    <property type="evidence" value="ECO:0007669"/>
    <property type="project" value="UniProtKB-KW"/>
</dbReference>
<dbReference type="GO" id="GO:0046872">
    <property type="term" value="F:metal ion binding"/>
    <property type="evidence" value="ECO:0007669"/>
    <property type="project" value="UniProtKB-KW"/>
</dbReference>
<dbReference type="GO" id="GO:0009098">
    <property type="term" value="P:L-leucine biosynthetic process"/>
    <property type="evidence" value="ECO:0007669"/>
    <property type="project" value="UniProtKB-UniRule"/>
</dbReference>
<dbReference type="CDD" id="cd01583">
    <property type="entry name" value="IPMI"/>
    <property type="match status" value="1"/>
</dbReference>
<dbReference type="FunFam" id="3.30.499.10:FF:000007">
    <property type="entry name" value="3-isopropylmalate dehydratase large subunit"/>
    <property type="match status" value="1"/>
</dbReference>
<dbReference type="Gene3D" id="3.30.499.10">
    <property type="entry name" value="Aconitase, domain 3"/>
    <property type="match status" value="2"/>
</dbReference>
<dbReference type="HAMAP" id="MF_01026">
    <property type="entry name" value="LeuC_type1"/>
    <property type="match status" value="1"/>
</dbReference>
<dbReference type="InterPro" id="IPR004430">
    <property type="entry name" value="3-IsopropMal_deHydase_lsu"/>
</dbReference>
<dbReference type="InterPro" id="IPR015931">
    <property type="entry name" value="Acnase/IPM_dHydase_lsu_aba_1/3"/>
</dbReference>
<dbReference type="InterPro" id="IPR001030">
    <property type="entry name" value="Acoase/IPM_deHydtase_lsu_aba"/>
</dbReference>
<dbReference type="InterPro" id="IPR018136">
    <property type="entry name" value="Aconitase_4Fe-4S_BS"/>
</dbReference>
<dbReference type="InterPro" id="IPR036008">
    <property type="entry name" value="Aconitase_4Fe-4S_dom"/>
</dbReference>
<dbReference type="InterPro" id="IPR050067">
    <property type="entry name" value="IPM_dehydratase_rel_enz"/>
</dbReference>
<dbReference type="InterPro" id="IPR033941">
    <property type="entry name" value="IPMI_cat"/>
</dbReference>
<dbReference type="NCBIfam" id="TIGR00170">
    <property type="entry name" value="leuC"/>
    <property type="match status" value="1"/>
</dbReference>
<dbReference type="NCBIfam" id="NF004016">
    <property type="entry name" value="PRK05478.1"/>
    <property type="match status" value="1"/>
</dbReference>
<dbReference type="NCBIfam" id="NF009116">
    <property type="entry name" value="PRK12466.1"/>
    <property type="match status" value="1"/>
</dbReference>
<dbReference type="PANTHER" id="PTHR43822:SF9">
    <property type="entry name" value="3-ISOPROPYLMALATE DEHYDRATASE"/>
    <property type="match status" value="1"/>
</dbReference>
<dbReference type="PANTHER" id="PTHR43822">
    <property type="entry name" value="HOMOACONITASE, MITOCHONDRIAL-RELATED"/>
    <property type="match status" value="1"/>
</dbReference>
<dbReference type="Pfam" id="PF00330">
    <property type="entry name" value="Aconitase"/>
    <property type="match status" value="1"/>
</dbReference>
<dbReference type="PRINTS" id="PR00415">
    <property type="entry name" value="ACONITASE"/>
</dbReference>
<dbReference type="SUPFAM" id="SSF53732">
    <property type="entry name" value="Aconitase iron-sulfur domain"/>
    <property type="match status" value="1"/>
</dbReference>
<dbReference type="PROSITE" id="PS00450">
    <property type="entry name" value="ACONITASE_1"/>
    <property type="match status" value="1"/>
</dbReference>
<dbReference type="PROSITE" id="PS01244">
    <property type="entry name" value="ACONITASE_2"/>
    <property type="match status" value="1"/>
</dbReference>
<proteinExistence type="inferred from homology"/>
<name>LEUC_ACIC5</name>
<feature type="chain" id="PRO_1000213325" description="3-isopropylmalate dehydratase large subunit">
    <location>
        <begin position="1"/>
        <end position="475"/>
    </location>
</feature>
<feature type="binding site" evidence="1">
    <location>
        <position position="348"/>
    </location>
    <ligand>
        <name>[4Fe-4S] cluster</name>
        <dbReference type="ChEBI" id="CHEBI:49883"/>
    </ligand>
</feature>
<feature type="binding site" evidence="1">
    <location>
        <position position="408"/>
    </location>
    <ligand>
        <name>[4Fe-4S] cluster</name>
        <dbReference type="ChEBI" id="CHEBI:49883"/>
    </ligand>
</feature>
<feature type="binding site" evidence="1">
    <location>
        <position position="411"/>
    </location>
    <ligand>
        <name>[4Fe-4S] cluster</name>
        <dbReference type="ChEBI" id="CHEBI:49883"/>
    </ligand>
</feature>
<organism>
    <name type="scientific">Acidobacterium capsulatum (strain ATCC 51196 / DSM 11244 / BCRC 80197 / JCM 7670 / NBRC 15755 / NCIMB 13165 / 161)</name>
    <dbReference type="NCBI Taxonomy" id="240015"/>
    <lineage>
        <taxon>Bacteria</taxon>
        <taxon>Pseudomonadati</taxon>
        <taxon>Acidobacteriota</taxon>
        <taxon>Terriglobia</taxon>
        <taxon>Terriglobales</taxon>
        <taxon>Acidobacteriaceae</taxon>
        <taxon>Acidobacterium</taxon>
    </lineage>
</organism>
<sequence length="475" mass="51765">MAKTLFEKVWEQHLVAEPANEPALLYIDLHLVHEVTSPQAFDGLRMTGRKLRRPDRTVATVDHNVPTIAADRLIIKDEIAARQIDALRRNCAEFGVELFDVQSREQGIVHVIGPELGLTKPGMTIVCGDSHTSTHGAFGALAFGIGTSEVEHVMATQCLPQGRPKTFRISVEGELPEGVTAKDIVLGIIGRIGTDGATGYVIEYAGSAIRSLSMEGRMTVCNMSIEAGARAGMIAPDETTFAYLKDREYSPKGKAWDEAVAAWSELKTDEGATFDRELVIPAIELTPYVTWGTNPGMVIPITDEIPGPETAASEADQRGIERALEYMGLKPGTPMEEVAIDVVFIGSCTNSRIEDLRAAAKVVTGYRVNEKVRAMVVPGSHRVKEQAEREGLDRIFREAGFEWREPGCSMCLGMNPDILTPGERCASTSNRNFEGRQGRGGRTHLVSPMMAAAAAITGHFSDIRTWEFKGEEVLA</sequence>
<comment type="function">
    <text evidence="1">Catalyzes the isomerization between 2-isopropylmalate and 3-isopropylmalate, via the formation of 2-isopropylmaleate.</text>
</comment>
<comment type="catalytic activity">
    <reaction evidence="1">
        <text>(2R,3S)-3-isopropylmalate = (2S)-2-isopropylmalate</text>
        <dbReference type="Rhea" id="RHEA:32287"/>
        <dbReference type="ChEBI" id="CHEBI:1178"/>
        <dbReference type="ChEBI" id="CHEBI:35121"/>
        <dbReference type="EC" id="4.2.1.33"/>
    </reaction>
</comment>
<comment type="cofactor">
    <cofactor evidence="1">
        <name>[4Fe-4S] cluster</name>
        <dbReference type="ChEBI" id="CHEBI:49883"/>
    </cofactor>
    <text evidence="1">Binds 1 [4Fe-4S] cluster per subunit.</text>
</comment>
<comment type="pathway">
    <text evidence="1">Amino-acid biosynthesis; L-leucine biosynthesis; L-leucine from 3-methyl-2-oxobutanoate: step 2/4.</text>
</comment>
<comment type="subunit">
    <text evidence="1">Heterodimer of LeuC and LeuD.</text>
</comment>
<comment type="similarity">
    <text evidence="1">Belongs to the aconitase/IPM isomerase family. LeuC type 1 subfamily.</text>
</comment>
<keyword id="KW-0004">4Fe-4S</keyword>
<keyword id="KW-0028">Amino-acid biosynthesis</keyword>
<keyword id="KW-0100">Branched-chain amino acid biosynthesis</keyword>
<keyword id="KW-0408">Iron</keyword>
<keyword id="KW-0411">Iron-sulfur</keyword>
<keyword id="KW-0432">Leucine biosynthesis</keyword>
<keyword id="KW-0456">Lyase</keyword>
<keyword id="KW-0479">Metal-binding</keyword>
<keyword id="KW-1185">Reference proteome</keyword>
<protein>
    <recommendedName>
        <fullName evidence="1">3-isopropylmalate dehydratase large subunit</fullName>
        <ecNumber evidence="1">4.2.1.33</ecNumber>
    </recommendedName>
    <alternativeName>
        <fullName evidence="1">Alpha-IPM isomerase</fullName>
        <shortName evidence="1">IPMI</shortName>
    </alternativeName>
    <alternativeName>
        <fullName evidence="1">Isopropylmalate isomerase</fullName>
    </alternativeName>
</protein>
<reference key="1">
    <citation type="journal article" date="2009" name="Appl. Environ. Microbiol.">
        <title>Three genomes from the phylum Acidobacteria provide insight into the lifestyles of these microorganisms in soils.</title>
        <authorList>
            <person name="Ward N.L."/>
            <person name="Challacombe J.F."/>
            <person name="Janssen P.H."/>
            <person name="Henrissat B."/>
            <person name="Coutinho P.M."/>
            <person name="Wu M."/>
            <person name="Xie G."/>
            <person name="Haft D.H."/>
            <person name="Sait M."/>
            <person name="Badger J."/>
            <person name="Barabote R.D."/>
            <person name="Bradley B."/>
            <person name="Brettin T.S."/>
            <person name="Brinkac L.M."/>
            <person name="Bruce D."/>
            <person name="Creasy T."/>
            <person name="Daugherty S.C."/>
            <person name="Davidsen T.M."/>
            <person name="DeBoy R.T."/>
            <person name="Detter J.C."/>
            <person name="Dodson R.J."/>
            <person name="Durkin A.S."/>
            <person name="Ganapathy A."/>
            <person name="Gwinn-Giglio M."/>
            <person name="Han C.S."/>
            <person name="Khouri H."/>
            <person name="Kiss H."/>
            <person name="Kothari S.P."/>
            <person name="Madupu R."/>
            <person name="Nelson K.E."/>
            <person name="Nelson W.C."/>
            <person name="Paulsen I."/>
            <person name="Penn K."/>
            <person name="Ren Q."/>
            <person name="Rosovitz M.J."/>
            <person name="Selengut J.D."/>
            <person name="Shrivastava S."/>
            <person name="Sullivan S.A."/>
            <person name="Tapia R."/>
            <person name="Thompson L.S."/>
            <person name="Watkins K.L."/>
            <person name="Yang Q."/>
            <person name="Yu C."/>
            <person name="Zafar N."/>
            <person name="Zhou L."/>
            <person name="Kuske C.R."/>
        </authorList>
    </citation>
    <scope>NUCLEOTIDE SEQUENCE [LARGE SCALE GENOMIC DNA]</scope>
    <source>
        <strain>ATCC 51196 / DSM 11244 / BCRC 80197 / JCM 7670 / NBRC 15755 / NCIMB 13165 / 161</strain>
    </source>
</reference>
<accession>C1F700</accession>
<evidence type="ECO:0000255" key="1">
    <source>
        <dbReference type="HAMAP-Rule" id="MF_01026"/>
    </source>
</evidence>
<gene>
    <name evidence="1" type="primary">leuC</name>
    <name type="ordered locus">ACP_3469</name>
</gene>